<organism>
    <name type="scientific">Streptococcus pneumoniae serotype 4 (strain ATCC BAA-334 / TIGR4)</name>
    <dbReference type="NCBI Taxonomy" id="170187"/>
    <lineage>
        <taxon>Bacteria</taxon>
        <taxon>Bacillati</taxon>
        <taxon>Bacillota</taxon>
        <taxon>Bacilli</taxon>
        <taxon>Lactobacillales</taxon>
        <taxon>Streptococcaceae</taxon>
        <taxon>Streptococcus</taxon>
    </lineage>
</organism>
<accession>P95830</accession>
<keyword id="KW-0143">Chaperone</keyword>
<keyword id="KW-0963">Cytoplasm</keyword>
<keyword id="KW-0235">DNA replication</keyword>
<keyword id="KW-0479">Metal-binding</keyword>
<keyword id="KW-1185">Reference proteome</keyword>
<keyword id="KW-0677">Repeat</keyword>
<keyword id="KW-0346">Stress response</keyword>
<keyword id="KW-0862">Zinc</keyword>
<keyword id="KW-0863">Zinc-finger</keyword>
<protein>
    <recommendedName>
        <fullName evidence="1">Chaperone protein DnaJ</fullName>
    </recommendedName>
</protein>
<comment type="function">
    <text evidence="1">Participates actively in the response to hyperosmotic and heat shock by preventing the aggregation of stress-denatured proteins and by disaggregating proteins, also in an autonomous, DnaK-independent fashion. Unfolded proteins bind initially to DnaJ; upon interaction with the DnaJ-bound protein, DnaK hydrolyzes its bound ATP, resulting in the formation of a stable complex. GrpE releases ADP from DnaK; ATP binding to DnaK triggers the release of the substrate protein, thus completing the reaction cycle. Several rounds of ATP-dependent interactions between DnaJ, DnaK and GrpE are required for fully efficient folding. Also involved, together with DnaK and GrpE, in the DNA replication of plasmids through activation of initiation proteins.</text>
</comment>
<comment type="cofactor">
    <cofactor evidence="1">
        <name>Zn(2+)</name>
        <dbReference type="ChEBI" id="CHEBI:29105"/>
    </cofactor>
    <text evidence="1">Binds 2 Zn(2+) ions per monomer.</text>
</comment>
<comment type="subunit">
    <text evidence="1">Homodimer.</text>
</comment>
<comment type="interaction">
    <interactant intactId="EBI-2207079">
        <id>P95830</id>
    </interactant>
    <interactant intactId="EBI-2207344">
        <id>P0A2W6</id>
        <label>acpS</label>
    </interactant>
    <organismsDiffer>false</organismsDiffer>
    <experiments>2</experiments>
</comment>
<comment type="interaction">
    <interactant intactId="EBI-2207079">
        <id>P95830</id>
    </interactant>
    <interactant intactId="EBI-2207290">
        <id>P63588</id>
        <label>aroD</label>
    </interactant>
    <organismsDiffer>false</organismsDiffer>
    <experiments>2</experiments>
</comment>
<comment type="interaction">
    <interactant intactId="EBI-2207079">
        <id>P95830</id>
    </interactant>
    <interactant intactId="EBI-2207206">
        <id>Q97QS2</id>
        <label>eno</label>
    </interactant>
    <organismsDiffer>false</organismsDiffer>
    <experiments>2</experiments>
</comment>
<comment type="interaction">
    <interactant intactId="EBI-2207079">
        <id>P95830</id>
    </interactant>
    <interactant intactId="EBI-2207053">
        <id>Q97SE5</id>
        <label>gatC</label>
    </interactant>
    <organismsDiffer>false</organismsDiffer>
    <experiments>2</experiments>
</comment>
<comment type="interaction">
    <interactant intactId="EBI-2207079">
        <id>P95830</id>
    </interactant>
    <interactant intactId="EBI-2206949">
        <id>Q97NV3</id>
        <label>groES</label>
    </interactant>
    <organismsDiffer>false</organismsDiffer>
    <experiments>2</experiments>
</comment>
<comment type="interaction">
    <interactant intactId="EBI-2207079">
        <id>P95830</id>
    </interactant>
    <interactant intactId="EBI-2207065">
        <id>Q97S73</id>
        <label>grpE</label>
    </interactant>
    <organismsDiffer>false</organismsDiffer>
    <experiments>2</experiments>
</comment>
<comment type="interaction">
    <interactant intactId="EBI-2207079">
        <id>P95830</id>
    </interactant>
    <interactant intactId="EBI-2207435">
        <id>P0A4T1</id>
        <label>malR</label>
    </interactant>
    <organismsDiffer>false</organismsDiffer>
    <experiments>2</experiments>
</comment>
<comment type="interaction">
    <interactant intactId="EBI-2207079">
        <id>P95830</id>
    </interactant>
    <interactant intactId="EBI-2207232">
        <id>P41354</id>
        <label>mutX</label>
    </interactant>
    <organismsDiffer>false</organismsDiffer>
    <experiments>2</experiments>
</comment>
<comment type="interaction">
    <interactant intactId="EBI-2207079">
        <id>P95830</id>
    </interactant>
    <interactant intactId="EBI-2206955">
        <id>P65887</id>
        <label>purA</label>
    </interactant>
    <organismsDiffer>false</organismsDiffer>
    <experiments>2</experiments>
</comment>
<comment type="interaction">
    <interactant intactId="EBI-2207079">
        <id>P95830</id>
    </interactant>
    <interactant intactId="EBI-2207248">
        <id>P65946</id>
        <label>pyrR</label>
    </interactant>
    <organismsDiffer>false</organismsDiffer>
    <experiments>2</experiments>
</comment>
<comment type="interaction">
    <interactant intactId="EBI-2207079">
        <id>P95830</id>
    </interactant>
    <interactant intactId="EBI-2206983">
        <id>Q97SR4</id>
        <label>uppS</label>
    </interactant>
    <organismsDiffer>false</organismsDiffer>
    <experiments>2</experiments>
</comment>
<comment type="subcellular location">
    <subcellularLocation>
        <location evidence="1">Cytoplasm</location>
    </subcellularLocation>
</comment>
<comment type="domain">
    <text evidence="1">The J domain is necessary and sufficient to stimulate DnaK ATPase activity. Zinc center 1 plays an important role in the autonomous, DnaK-independent chaperone activity of DnaJ. Zinc center 2 is essential for interaction with DnaK and for DnaJ activity.</text>
</comment>
<comment type="similarity">
    <text evidence="1">Belongs to the DnaJ family.</text>
</comment>
<gene>
    <name evidence="1" type="primary">dnaJ</name>
    <name type="ordered locus">SP_0519</name>
</gene>
<reference key="1">
    <citation type="submission" date="2001-07" db="EMBL/GenBank/DDBJ databases">
        <title>DnaJ sequence in Streptococcus pneumoniae CP1200.</title>
        <authorList>
            <person name="Bae Y.G."/>
            <person name="Kim S.H."/>
            <person name="Rhee D.K."/>
        </authorList>
    </citation>
    <scope>NUCLEOTIDE SEQUENCE [GENOMIC DNA]</scope>
    <source>
        <strain>Rx / CP1200</strain>
    </source>
</reference>
<reference key="2">
    <citation type="journal article" date="2001" name="Science">
        <title>Complete genome sequence of a virulent isolate of Streptococcus pneumoniae.</title>
        <authorList>
            <person name="Tettelin H."/>
            <person name="Nelson K.E."/>
            <person name="Paulsen I.T."/>
            <person name="Eisen J.A."/>
            <person name="Read T.D."/>
            <person name="Peterson S.N."/>
            <person name="Heidelberg J.F."/>
            <person name="DeBoy R.T."/>
            <person name="Haft D.H."/>
            <person name="Dodson R.J."/>
            <person name="Durkin A.S."/>
            <person name="Gwinn M.L."/>
            <person name="Kolonay J.F."/>
            <person name="Nelson W.C."/>
            <person name="Peterson J.D."/>
            <person name="Umayam L.A."/>
            <person name="White O."/>
            <person name="Salzberg S.L."/>
            <person name="Lewis M.R."/>
            <person name="Radune D."/>
            <person name="Holtzapple E.K."/>
            <person name="Khouri H.M."/>
            <person name="Wolf A.M."/>
            <person name="Utterback T.R."/>
            <person name="Hansen C.L."/>
            <person name="McDonald L.A."/>
            <person name="Feldblyum T.V."/>
            <person name="Angiuoli S.V."/>
            <person name="Dickinson T."/>
            <person name="Hickey E.K."/>
            <person name="Holt I.E."/>
            <person name="Loftus B.J."/>
            <person name="Yang F."/>
            <person name="Smith H.O."/>
            <person name="Venter J.C."/>
            <person name="Dougherty B.A."/>
            <person name="Morrison D.A."/>
            <person name="Hollingshead S.K."/>
            <person name="Fraser C.M."/>
        </authorList>
    </citation>
    <scope>NUCLEOTIDE SEQUENCE [LARGE SCALE GENOMIC DNA]</scope>
    <source>
        <strain>ATCC BAA-334 / TIGR4</strain>
    </source>
</reference>
<reference key="3">
    <citation type="submission" date="1996-09" db="EMBL/GenBank/DDBJ databases">
        <title>Heat shock protein HSP70 and amino terminus of DnaJ of Streptococcus pneumoniae.</title>
        <authorList>
            <person name="Rioux C.R."/>
            <person name="Martin D."/>
            <person name="Hamel J."/>
            <person name="Brodeur B.R."/>
        </authorList>
    </citation>
    <scope>NUCLEOTIDE SEQUENCE [GENOMIC DNA] OF 1-352</scope>
</reference>
<evidence type="ECO:0000255" key="1">
    <source>
        <dbReference type="HAMAP-Rule" id="MF_01152"/>
    </source>
</evidence>
<dbReference type="EMBL" id="AY049058">
    <property type="protein sequence ID" value="AAL14123.1"/>
    <property type="molecule type" value="Genomic_DNA"/>
</dbReference>
<dbReference type="EMBL" id="AE005672">
    <property type="protein sequence ID" value="AAK74677.1"/>
    <property type="molecule type" value="Genomic_DNA"/>
</dbReference>
<dbReference type="EMBL" id="U72720">
    <property type="protein sequence ID" value="AAB39222.1"/>
    <property type="molecule type" value="Genomic_DNA"/>
</dbReference>
<dbReference type="PIR" id="D95060">
    <property type="entry name" value="D95060"/>
</dbReference>
<dbReference type="RefSeq" id="WP_001066295.1">
    <property type="nucleotide sequence ID" value="NZ_CP155539.1"/>
</dbReference>
<dbReference type="SMR" id="P95830"/>
<dbReference type="IntAct" id="P95830">
    <property type="interactions" value="12"/>
</dbReference>
<dbReference type="PaxDb" id="170187-SP_0519"/>
<dbReference type="EnsemblBacteria" id="AAK74677">
    <property type="protein sequence ID" value="AAK74677"/>
    <property type="gene ID" value="SP_0519"/>
</dbReference>
<dbReference type="KEGG" id="spn:SP_0519"/>
<dbReference type="eggNOG" id="COG0484">
    <property type="taxonomic scope" value="Bacteria"/>
</dbReference>
<dbReference type="PhylomeDB" id="P95830"/>
<dbReference type="BioCyc" id="SPNE170187:G1FZB-534-MONOMER"/>
<dbReference type="PHI-base" id="PHI:6986"/>
<dbReference type="Proteomes" id="UP000000585">
    <property type="component" value="Chromosome"/>
</dbReference>
<dbReference type="GO" id="GO:0005737">
    <property type="term" value="C:cytoplasm"/>
    <property type="evidence" value="ECO:0007669"/>
    <property type="project" value="UniProtKB-SubCell"/>
</dbReference>
<dbReference type="GO" id="GO:0005524">
    <property type="term" value="F:ATP binding"/>
    <property type="evidence" value="ECO:0007669"/>
    <property type="project" value="InterPro"/>
</dbReference>
<dbReference type="GO" id="GO:0031072">
    <property type="term" value="F:heat shock protein binding"/>
    <property type="evidence" value="ECO:0007669"/>
    <property type="project" value="InterPro"/>
</dbReference>
<dbReference type="GO" id="GO:0051082">
    <property type="term" value="F:unfolded protein binding"/>
    <property type="evidence" value="ECO:0007669"/>
    <property type="project" value="UniProtKB-UniRule"/>
</dbReference>
<dbReference type="GO" id="GO:0008270">
    <property type="term" value="F:zinc ion binding"/>
    <property type="evidence" value="ECO:0007669"/>
    <property type="project" value="UniProtKB-UniRule"/>
</dbReference>
<dbReference type="GO" id="GO:0051085">
    <property type="term" value="P:chaperone cofactor-dependent protein refolding"/>
    <property type="evidence" value="ECO:0007669"/>
    <property type="project" value="TreeGrafter"/>
</dbReference>
<dbReference type="GO" id="GO:0006260">
    <property type="term" value="P:DNA replication"/>
    <property type="evidence" value="ECO:0007669"/>
    <property type="project" value="UniProtKB-KW"/>
</dbReference>
<dbReference type="GO" id="GO:0042026">
    <property type="term" value="P:protein refolding"/>
    <property type="evidence" value="ECO:0007669"/>
    <property type="project" value="TreeGrafter"/>
</dbReference>
<dbReference type="GO" id="GO:0009408">
    <property type="term" value="P:response to heat"/>
    <property type="evidence" value="ECO:0007669"/>
    <property type="project" value="InterPro"/>
</dbReference>
<dbReference type="CDD" id="cd06257">
    <property type="entry name" value="DnaJ"/>
    <property type="match status" value="1"/>
</dbReference>
<dbReference type="CDD" id="cd10747">
    <property type="entry name" value="DnaJ_C"/>
    <property type="match status" value="1"/>
</dbReference>
<dbReference type="CDD" id="cd10719">
    <property type="entry name" value="DnaJ_zf"/>
    <property type="match status" value="1"/>
</dbReference>
<dbReference type="FunFam" id="1.10.287.110:FF:000031">
    <property type="entry name" value="Molecular chaperone DnaJ"/>
    <property type="match status" value="1"/>
</dbReference>
<dbReference type="FunFam" id="2.10.230.10:FF:000002">
    <property type="entry name" value="Molecular chaperone DnaJ"/>
    <property type="match status" value="1"/>
</dbReference>
<dbReference type="FunFam" id="2.60.260.20:FF:000004">
    <property type="entry name" value="Molecular chaperone DnaJ"/>
    <property type="match status" value="1"/>
</dbReference>
<dbReference type="Gene3D" id="1.10.287.110">
    <property type="entry name" value="DnaJ domain"/>
    <property type="match status" value="1"/>
</dbReference>
<dbReference type="Gene3D" id="2.10.230.10">
    <property type="entry name" value="Heat shock protein DnaJ, cysteine-rich domain"/>
    <property type="match status" value="1"/>
</dbReference>
<dbReference type="Gene3D" id="2.60.260.20">
    <property type="entry name" value="Urease metallochaperone UreE, N-terminal domain"/>
    <property type="match status" value="2"/>
</dbReference>
<dbReference type="HAMAP" id="MF_01152">
    <property type="entry name" value="DnaJ"/>
    <property type="match status" value="1"/>
</dbReference>
<dbReference type="InterPro" id="IPR012724">
    <property type="entry name" value="DnaJ"/>
</dbReference>
<dbReference type="InterPro" id="IPR002939">
    <property type="entry name" value="DnaJ_C"/>
</dbReference>
<dbReference type="InterPro" id="IPR001623">
    <property type="entry name" value="DnaJ_domain"/>
</dbReference>
<dbReference type="InterPro" id="IPR018253">
    <property type="entry name" value="DnaJ_domain_CS"/>
</dbReference>
<dbReference type="InterPro" id="IPR008971">
    <property type="entry name" value="HSP40/DnaJ_pept-bd"/>
</dbReference>
<dbReference type="InterPro" id="IPR001305">
    <property type="entry name" value="HSP_DnaJ_Cys-rich_dom"/>
</dbReference>
<dbReference type="InterPro" id="IPR036410">
    <property type="entry name" value="HSP_DnaJ_Cys-rich_dom_sf"/>
</dbReference>
<dbReference type="InterPro" id="IPR036869">
    <property type="entry name" value="J_dom_sf"/>
</dbReference>
<dbReference type="NCBIfam" id="TIGR02349">
    <property type="entry name" value="DnaJ_bact"/>
    <property type="match status" value="1"/>
</dbReference>
<dbReference type="NCBIfam" id="NF008035">
    <property type="entry name" value="PRK10767.1"/>
    <property type="match status" value="1"/>
</dbReference>
<dbReference type="NCBIfam" id="NF010869">
    <property type="entry name" value="PRK14276.1"/>
    <property type="match status" value="1"/>
</dbReference>
<dbReference type="PANTHER" id="PTHR43096:SF48">
    <property type="entry name" value="CHAPERONE PROTEIN DNAJ"/>
    <property type="match status" value="1"/>
</dbReference>
<dbReference type="PANTHER" id="PTHR43096">
    <property type="entry name" value="DNAJ HOMOLOG 1, MITOCHONDRIAL-RELATED"/>
    <property type="match status" value="1"/>
</dbReference>
<dbReference type="Pfam" id="PF00226">
    <property type="entry name" value="DnaJ"/>
    <property type="match status" value="1"/>
</dbReference>
<dbReference type="Pfam" id="PF01556">
    <property type="entry name" value="DnaJ_C"/>
    <property type="match status" value="1"/>
</dbReference>
<dbReference type="Pfam" id="PF00684">
    <property type="entry name" value="DnaJ_CXXCXGXG"/>
    <property type="match status" value="1"/>
</dbReference>
<dbReference type="PRINTS" id="PR00625">
    <property type="entry name" value="JDOMAIN"/>
</dbReference>
<dbReference type="SMART" id="SM00271">
    <property type="entry name" value="DnaJ"/>
    <property type="match status" value="1"/>
</dbReference>
<dbReference type="SUPFAM" id="SSF46565">
    <property type="entry name" value="Chaperone J-domain"/>
    <property type="match status" value="1"/>
</dbReference>
<dbReference type="SUPFAM" id="SSF57938">
    <property type="entry name" value="DnaJ/Hsp40 cysteine-rich domain"/>
    <property type="match status" value="1"/>
</dbReference>
<dbReference type="SUPFAM" id="SSF49493">
    <property type="entry name" value="HSP40/DnaJ peptide-binding domain"/>
    <property type="match status" value="2"/>
</dbReference>
<dbReference type="PROSITE" id="PS00636">
    <property type="entry name" value="DNAJ_1"/>
    <property type="match status" value="1"/>
</dbReference>
<dbReference type="PROSITE" id="PS50076">
    <property type="entry name" value="DNAJ_2"/>
    <property type="match status" value="1"/>
</dbReference>
<dbReference type="PROSITE" id="PS51188">
    <property type="entry name" value="ZF_CR"/>
    <property type="match status" value="1"/>
</dbReference>
<sequence length="378" mass="40502">MNNTEFYDRLGVSKNASADEIKKAYRKLSKKYHPDINKEPGAEDKYKEVQEAYETLSDDQKRAAYDQYGAAGANGGFGGAGGFGGFNGAGGFGGFEDIFSSFFGGGGSSRNPNAPRQGDDLQYRVNLTFEEAIFGTEKEVKYHREAGCRTCNGSGAKPGTSPVTCGRCHGAGVINVDTQTPLGMMRRQVTCDVCHGRGKEIKYPCTTCHGTGHEKQAHSVHVKIPAGVETGQQIRLAGQGEAGFNGGPYGDLYVVVSVEASDKFEREGTTIFYNLNLNFVQAALGDTVDIPTVHGDVELVIPEGTQTGKKFRLRSKGAPSLRGGAVGDQYVTVNVVTPTGLNDRQKVALKEFAAAGDLKVNPKKKGFFDHIKDAFDGE</sequence>
<proteinExistence type="evidence at protein level"/>
<name>DNAJ_STRPN</name>
<feature type="chain" id="PRO_0000070901" description="Chaperone protein DnaJ">
    <location>
        <begin position="1"/>
        <end position="378"/>
    </location>
</feature>
<feature type="domain" description="J" evidence="1">
    <location>
        <begin position="5"/>
        <end position="69"/>
    </location>
</feature>
<feature type="repeat" description="CXXCXGXG motif">
    <location>
        <begin position="148"/>
        <end position="155"/>
    </location>
</feature>
<feature type="repeat" description="CXXCXGXG motif">
    <location>
        <begin position="165"/>
        <end position="172"/>
    </location>
</feature>
<feature type="repeat" description="CXXCXGXG motif">
    <location>
        <begin position="191"/>
        <end position="198"/>
    </location>
</feature>
<feature type="repeat" description="CXXCXGXG motif">
    <location>
        <begin position="205"/>
        <end position="212"/>
    </location>
</feature>
<feature type="zinc finger region" description="CR-type" evidence="1">
    <location>
        <begin position="135"/>
        <end position="217"/>
    </location>
</feature>
<feature type="binding site" evidence="1">
    <location>
        <position position="148"/>
    </location>
    <ligand>
        <name>Zn(2+)</name>
        <dbReference type="ChEBI" id="CHEBI:29105"/>
        <label>1</label>
    </ligand>
</feature>
<feature type="binding site" evidence="1">
    <location>
        <position position="151"/>
    </location>
    <ligand>
        <name>Zn(2+)</name>
        <dbReference type="ChEBI" id="CHEBI:29105"/>
        <label>1</label>
    </ligand>
</feature>
<feature type="binding site" evidence="1">
    <location>
        <position position="165"/>
    </location>
    <ligand>
        <name>Zn(2+)</name>
        <dbReference type="ChEBI" id="CHEBI:29105"/>
        <label>2</label>
    </ligand>
</feature>
<feature type="binding site" evidence="1">
    <location>
        <position position="168"/>
    </location>
    <ligand>
        <name>Zn(2+)</name>
        <dbReference type="ChEBI" id="CHEBI:29105"/>
        <label>2</label>
    </ligand>
</feature>
<feature type="binding site" evidence="1">
    <location>
        <position position="191"/>
    </location>
    <ligand>
        <name>Zn(2+)</name>
        <dbReference type="ChEBI" id="CHEBI:29105"/>
        <label>2</label>
    </ligand>
</feature>
<feature type="binding site" evidence="1">
    <location>
        <position position="194"/>
    </location>
    <ligand>
        <name>Zn(2+)</name>
        <dbReference type="ChEBI" id="CHEBI:29105"/>
        <label>2</label>
    </ligand>
</feature>
<feature type="binding site" evidence="1">
    <location>
        <position position="205"/>
    </location>
    <ligand>
        <name>Zn(2+)</name>
        <dbReference type="ChEBI" id="CHEBI:29105"/>
        <label>1</label>
    </ligand>
</feature>
<feature type="binding site" evidence="1">
    <location>
        <position position="208"/>
    </location>
    <ligand>
        <name>Zn(2+)</name>
        <dbReference type="ChEBI" id="CHEBI:29105"/>
        <label>1</label>
    </ligand>
</feature>